<sequence length="121" mass="12299">MSITKDQIIEAVSAMSVMDVVELISAMEEKFGVSAAAAVAVAAGPAEAAEEKTEFDVILKAAGANKVAVIKAVRGATGLGLKEAKDLVESAPAALKEGVSKDDAEALKKSLEEAGAEVEVK</sequence>
<keyword id="KW-0687">Ribonucleoprotein</keyword>
<keyword id="KW-0689">Ribosomal protein</keyword>
<protein>
    <recommendedName>
        <fullName evidence="1">Large ribosomal subunit protein bL12</fullName>
    </recommendedName>
    <alternativeName>
        <fullName evidence="2">50S ribosomal protein L7/L12</fullName>
    </alternativeName>
</protein>
<gene>
    <name evidence="1" type="primary">rplL</name>
    <name type="ordered locus">SPC_3984</name>
</gene>
<reference key="1">
    <citation type="journal article" date="2009" name="PLoS ONE">
        <title>Salmonella paratyphi C: genetic divergence from Salmonella choleraesuis and pathogenic convergence with Salmonella typhi.</title>
        <authorList>
            <person name="Liu W.-Q."/>
            <person name="Feng Y."/>
            <person name="Wang Y."/>
            <person name="Zou Q.-H."/>
            <person name="Chen F."/>
            <person name="Guo J.-T."/>
            <person name="Peng Y.-H."/>
            <person name="Jin Y."/>
            <person name="Li Y.-G."/>
            <person name="Hu S.-N."/>
            <person name="Johnston R.N."/>
            <person name="Liu G.-R."/>
            <person name="Liu S.-L."/>
        </authorList>
    </citation>
    <scope>NUCLEOTIDE SEQUENCE [LARGE SCALE GENOMIC DNA]</scope>
    <source>
        <strain>RKS4594</strain>
    </source>
</reference>
<feature type="chain" id="PRO_1000133859" description="Large ribosomal subunit protein bL12">
    <location>
        <begin position="1"/>
        <end position="121"/>
    </location>
</feature>
<proteinExistence type="inferred from homology"/>
<dbReference type="EMBL" id="CP000857">
    <property type="protein sequence ID" value="ACN48052.1"/>
    <property type="molecule type" value="Genomic_DNA"/>
</dbReference>
<dbReference type="RefSeq" id="WP_000028882.1">
    <property type="nucleotide sequence ID" value="NC_012125.1"/>
</dbReference>
<dbReference type="SMR" id="C0Q2R6"/>
<dbReference type="GeneID" id="89551069"/>
<dbReference type="KEGG" id="sei:SPC_3984"/>
<dbReference type="HOGENOM" id="CLU_086499_3_2_6"/>
<dbReference type="Proteomes" id="UP000001599">
    <property type="component" value="Chromosome"/>
</dbReference>
<dbReference type="GO" id="GO:0022625">
    <property type="term" value="C:cytosolic large ribosomal subunit"/>
    <property type="evidence" value="ECO:0007669"/>
    <property type="project" value="TreeGrafter"/>
</dbReference>
<dbReference type="GO" id="GO:0003729">
    <property type="term" value="F:mRNA binding"/>
    <property type="evidence" value="ECO:0007669"/>
    <property type="project" value="TreeGrafter"/>
</dbReference>
<dbReference type="GO" id="GO:0003735">
    <property type="term" value="F:structural constituent of ribosome"/>
    <property type="evidence" value="ECO:0007669"/>
    <property type="project" value="InterPro"/>
</dbReference>
<dbReference type="GO" id="GO:0006412">
    <property type="term" value="P:translation"/>
    <property type="evidence" value="ECO:0007669"/>
    <property type="project" value="UniProtKB-UniRule"/>
</dbReference>
<dbReference type="CDD" id="cd00387">
    <property type="entry name" value="Ribosomal_L7_L12"/>
    <property type="match status" value="1"/>
</dbReference>
<dbReference type="FunFam" id="1.20.5.710:FF:000001">
    <property type="entry name" value="50S ribosomal protein L7/L12"/>
    <property type="match status" value="1"/>
</dbReference>
<dbReference type="FunFam" id="3.30.1390.10:FF:000001">
    <property type="entry name" value="50S ribosomal protein L7/L12"/>
    <property type="match status" value="1"/>
</dbReference>
<dbReference type="Gene3D" id="3.30.1390.10">
    <property type="match status" value="1"/>
</dbReference>
<dbReference type="Gene3D" id="1.20.5.710">
    <property type="entry name" value="Single helix bin"/>
    <property type="match status" value="1"/>
</dbReference>
<dbReference type="HAMAP" id="MF_00368">
    <property type="entry name" value="Ribosomal_bL12"/>
    <property type="match status" value="1"/>
</dbReference>
<dbReference type="InterPro" id="IPR000206">
    <property type="entry name" value="Ribosomal_bL12"/>
</dbReference>
<dbReference type="InterPro" id="IPR013823">
    <property type="entry name" value="Ribosomal_bL12_C"/>
</dbReference>
<dbReference type="InterPro" id="IPR014719">
    <property type="entry name" value="Ribosomal_bL12_C/ClpS-like"/>
</dbReference>
<dbReference type="InterPro" id="IPR008932">
    <property type="entry name" value="Ribosomal_bL12_oligo"/>
</dbReference>
<dbReference type="InterPro" id="IPR036235">
    <property type="entry name" value="Ribosomal_bL12_oligo_N_sf"/>
</dbReference>
<dbReference type="NCBIfam" id="TIGR00855">
    <property type="entry name" value="L12"/>
    <property type="match status" value="1"/>
</dbReference>
<dbReference type="PANTHER" id="PTHR45987">
    <property type="entry name" value="39S RIBOSOMAL PROTEIN L12"/>
    <property type="match status" value="1"/>
</dbReference>
<dbReference type="PANTHER" id="PTHR45987:SF4">
    <property type="entry name" value="LARGE RIBOSOMAL SUBUNIT PROTEIN BL12M"/>
    <property type="match status" value="1"/>
</dbReference>
<dbReference type="Pfam" id="PF00542">
    <property type="entry name" value="Ribosomal_L12"/>
    <property type="match status" value="1"/>
</dbReference>
<dbReference type="Pfam" id="PF16320">
    <property type="entry name" value="Ribosomal_L12_N"/>
    <property type="match status" value="1"/>
</dbReference>
<dbReference type="SUPFAM" id="SSF54736">
    <property type="entry name" value="ClpS-like"/>
    <property type="match status" value="1"/>
</dbReference>
<dbReference type="SUPFAM" id="SSF48300">
    <property type="entry name" value="Ribosomal protein L7/12, oligomerisation (N-terminal) domain"/>
    <property type="match status" value="1"/>
</dbReference>
<accession>C0Q2R6</accession>
<comment type="function">
    <text evidence="1">Forms part of the ribosomal stalk which helps the ribosome interact with GTP-bound translation factors. Is thus essential for accurate translation.</text>
</comment>
<comment type="subunit">
    <text evidence="1">Homodimer. Part of the ribosomal stalk of the 50S ribosomal subunit. Forms a multimeric L10(L12)X complex, where L10 forms an elongated spine to which 2 to 4 L12 dimers bind in a sequential fashion. Binds GTP-bound translation factors.</text>
</comment>
<comment type="similarity">
    <text evidence="1">Belongs to the bacterial ribosomal protein bL12 family.</text>
</comment>
<name>RL7_SALPC</name>
<evidence type="ECO:0000255" key="1">
    <source>
        <dbReference type="HAMAP-Rule" id="MF_00368"/>
    </source>
</evidence>
<evidence type="ECO:0000305" key="2"/>
<organism>
    <name type="scientific">Salmonella paratyphi C (strain RKS4594)</name>
    <dbReference type="NCBI Taxonomy" id="476213"/>
    <lineage>
        <taxon>Bacteria</taxon>
        <taxon>Pseudomonadati</taxon>
        <taxon>Pseudomonadota</taxon>
        <taxon>Gammaproteobacteria</taxon>
        <taxon>Enterobacterales</taxon>
        <taxon>Enterobacteriaceae</taxon>
        <taxon>Salmonella</taxon>
    </lineage>
</organism>